<evidence type="ECO:0000255" key="1">
    <source>
        <dbReference type="HAMAP-Rule" id="MF_00060"/>
    </source>
</evidence>
<sequence length="276" mass="30444">MTNPSTINILISNDDGIFALGVRTLANTLAQAGYQVTVVCPDRERSATGHGLTLHRPIRADIVEDFFDPKITAWSCSGTPSDCVKLALSSLIENRPDFIVSGINHGSNLGTDVLYSGTVSAAMEGIIEGIPSIAMSLASFSSRQFQPGADFACGLIQQLYDHPLPDSTLLNVNIPPVTADAIAGVMLTRQGLRRYIENFEKRFDPRGKSYYWLAGELVTEIEQPDHIHLPSHIPTDVQAIQHNYITLTPLQYNLTDVASFEYLQTNQWLERSRDIK</sequence>
<proteinExistence type="inferred from homology"/>
<reference key="1">
    <citation type="journal article" date="2008" name="Proc. Natl. Acad. Sci. U.S.A.">
        <title>The genome of Cyanothece 51142, a unicellular diazotrophic cyanobacterium important in the marine nitrogen cycle.</title>
        <authorList>
            <person name="Welsh E.A."/>
            <person name="Liberton M."/>
            <person name="Stoeckel J."/>
            <person name="Loh T."/>
            <person name="Elvitigala T."/>
            <person name="Wang C."/>
            <person name="Wollam A."/>
            <person name="Fulton R.S."/>
            <person name="Clifton S.W."/>
            <person name="Jacobs J.M."/>
            <person name="Aurora R."/>
            <person name="Ghosh B.K."/>
            <person name="Sherman L.A."/>
            <person name="Smith R.D."/>
            <person name="Wilson R.K."/>
            <person name="Pakrasi H.B."/>
        </authorList>
    </citation>
    <scope>NUCLEOTIDE SEQUENCE [LARGE SCALE GENOMIC DNA]</scope>
    <source>
        <strain>ATCC 51142 / BH68</strain>
    </source>
</reference>
<gene>
    <name evidence="1" type="primary">surE</name>
    <name type="ordered locus">cce_1570</name>
</gene>
<organism>
    <name type="scientific">Crocosphaera subtropica (strain ATCC 51142 / BH68)</name>
    <name type="common">Cyanothece sp. (strain ATCC 51142)</name>
    <dbReference type="NCBI Taxonomy" id="43989"/>
    <lineage>
        <taxon>Bacteria</taxon>
        <taxon>Bacillati</taxon>
        <taxon>Cyanobacteriota</taxon>
        <taxon>Cyanophyceae</taxon>
        <taxon>Oscillatoriophycideae</taxon>
        <taxon>Chroococcales</taxon>
        <taxon>Aphanothecaceae</taxon>
        <taxon>Crocosphaera</taxon>
        <taxon>Crocosphaera subtropica</taxon>
    </lineage>
</organism>
<feature type="chain" id="PRO_1000091998" description="5'-nucleotidase SurE">
    <location>
        <begin position="1"/>
        <end position="276"/>
    </location>
</feature>
<feature type="binding site" evidence="1">
    <location>
        <position position="14"/>
    </location>
    <ligand>
        <name>a divalent metal cation</name>
        <dbReference type="ChEBI" id="CHEBI:60240"/>
    </ligand>
</feature>
<feature type="binding site" evidence="1">
    <location>
        <position position="15"/>
    </location>
    <ligand>
        <name>a divalent metal cation</name>
        <dbReference type="ChEBI" id="CHEBI:60240"/>
    </ligand>
</feature>
<feature type="binding site" evidence="1">
    <location>
        <position position="46"/>
    </location>
    <ligand>
        <name>a divalent metal cation</name>
        <dbReference type="ChEBI" id="CHEBI:60240"/>
    </ligand>
</feature>
<feature type="binding site" evidence="1">
    <location>
        <position position="104"/>
    </location>
    <ligand>
        <name>a divalent metal cation</name>
        <dbReference type="ChEBI" id="CHEBI:60240"/>
    </ligand>
</feature>
<dbReference type="EC" id="3.1.3.5" evidence="1"/>
<dbReference type="EMBL" id="CP000806">
    <property type="protein sequence ID" value="ACB50920.1"/>
    <property type="molecule type" value="Genomic_DNA"/>
</dbReference>
<dbReference type="RefSeq" id="WP_009544375.1">
    <property type="nucleotide sequence ID" value="NC_010546.1"/>
</dbReference>
<dbReference type="SMR" id="B1WXT3"/>
<dbReference type="STRING" id="43989.cce_1570"/>
<dbReference type="KEGG" id="cyt:cce_1570"/>
<dbReference type="eggNOG" id="COG0496">
    <property type="taxonomic scope" value="Bacteria"/>
</dbReference>
<dbReference type="HOGENOM" id="CLU_045192_1_3_3"/>
<dbReference type="OrthoDB" id="9780815at2"/>
<dbReference type="Proteomes" id="UP000001203">
    <property type="component" value="Chromosome circular"/>
</dbReference>
<dbReference type="GO" id="GO:0005737">
    <property type="term" value="C:cytoplasm"/>
    <property type="evidence" value="ECO:0007669"/>
    <property type="project" value="UniProtKB-SubCell"/>
</dbReference>
<dbReference type="GO" id="GO:0008254">
    <property type="term" value="F:3'-nucleotidase activity"/>
    <property type="evidence" value="ECO:0007669"/>
    <property type="project" value="TreeGrafter"/>
</dbReference>
<dbReference type="GO" id="GO:0008253">
    <property type="term" value="F:5'-nucleotidase activity"/>
    <property type="evidence" value="ECO:0007669"/>
    <property type="project" value="UniProtKB-UniRule"/>
</dbReference>
<dbReference type="GO" id="GO:0004309">
    <property type="term" value="F:exopolyphosphatase activity"/>
    <property type="evidence" value="ECO:0007669"/>
    <property type="project" value="TreeGrafter"/>
</dbReference>
<dbReference type="GO" id="GO:0046872">
    <property type="term" value="F:metal ion binding"/>
    <property type="evidence" value="ECO:0007669"/>
    <property type="project" value="UniProtKB-UniRule"/>
</dbReference>
<dbReference type="GO" id="GO:0000166">
    <property type="term" value="F:nucleotide binding"/>
    <property type="evidence" value="ECO:0007669"/>
    <property type="project" value="UniProtKB-KW"/>
</dbReference>
<dbReference type="FunFam" id="3.40.1210.10:FF:000001">
    <property type="entry name" value="5'/3'-nucleotidase SurE"/>
    <property type="match status" value="1"/>
</dbReference>
<dbReference type="Gene3D" id="3.40.1210.10">
    <property type="entry name" value="Survival protein SurE-like phosphatase/nucleotidase"/>
    <property type="match status" value="1"/>
</dbReference>
<dbReference type="HAMAP" id="MF_00060">
    <property type="entry name" value="SurE"/>
    <property type="match status" value="1"/>
</dbReference>
<dbReference type="InterPro" id="IPR030048">
    <property type="entry name" value="SurE"/>
</dbReference>
<dbReference type="InterPro" id="IPR002828">
    <property type="entry name" value="SurE-like_Pase/nucleotidase"/>
</dbReference>
<dbReference type="InterPro" id="IPR036523">
    <property type="entry name" value="SurE-like_sf"/>
</dbReference>
<dbReference type="NCBIfam" id="NF001490">
    <property type="entry name" value="PRK00346.1-4"/>
    <property type="match status" value="1"/>
</dbReference>
<dbReference type="NCBIfam" id="NF001492">
    <property type="entry name" value="PRK00346.2-2"/>
    <property type="match status" value="1"/>
</dbReference>
<dbReference type="NCBIfam" id="TIGR00087">
    <property type="entry name" value="surE"/>
    <property type="match status" value="1"/>
</dbReference>
<dbReference type="PANTHER" id="PTHR30457">
    <property type="entry name" value="5'-NUCLEOTIDASE SURE"/>
    <property type="match status" value="1"/>
</dbReference>
<dbReference type="PANTHER" id="PTHR30457:SF12">
    <property type="entry name" value="5'_3'-NUCLEOTIDASE SURE"/>
    <property type="match status" value="1"/>
</dbReference>
<dbReference type="Pfam" id="PF01975">
    <property type="entry name" value="SurE"/>
    <property type="match status" value="1"/>
</dbReference>
<dbReference type="SUPFAM" id="SSF64167">
    <property type="entry name" value="SurE-like"/>
    <property type="match status" value="1"/>
</dbReference>
<keyword id="KW-0963">Cytoplasm</keyword>
<keyword id="KW-0378">Hydrolase</keyword>
<keyword id="KW-0479">Metal-binding</keyword>
<keyword id="KW-0547">Nucleotide-binding</keyword>
<keyword id="KW-1185">Reference proteome</keyword>
<accession>B1WXT3</accession>
<name>SURE_CROS5</name>
<comment type="function">
    <text evidence="1">Nucleotidase that shows phosphatase activity on nucleoside 5'-monophosphates.</text>
</comment>
<comment type="catalytic activity">
    <reaction evidence="1">
        <text>a ribonucleoside 5'-phosphate + H2O = a ribonucleoside + phosphate</text>
        <dbReference type="Rhea" id="RHEA:12484"/>
        <dbReference type="ChEBI" id="CHEBI:15377"/>
        <dbReference type="ChEBI" id="CHEBI:18254"/>
        <dbReference type="ChEBI" id="CHEBI:43474"/>
        <dbReference type="ChEBI" id="CHEBI:58043"/>
        <dbReference type="EC" id="3.1.3.5"/>
    </reaction>
</comment>
<comment type="cofactor">
    <cofactor evidence="1">
        <name>a divalent metal cation</name>
        <dbReference type="ChEBI" id="CHEBI:60240"/>
    </cofactor>
    <text evidence="1">Binds 1 divalent metal cation per subunit.</text>
</comment>
<comment type="subcellular location">
    <subcellularLocation>
        <location evidence="1">Cytoplasm</location>
    </subcellularLocation>
</comment>
<comment type="similarity">
    <text evidence="1">Belongs to the SurE nucleotidase family.</text>
</comment>
<protein>
    <recommendedName>
        <fullName evidence="1">5'-nucleotidase SurE</fullName>
        <ecNumber evidence="1">3.1.3.5</ecNumber>
    </recommendedName>
    <alternativeName>
        <fullName evidence="1">Nucleoside 5'-monophosphate phosphohydrolase</fullName>
    </alternativeName>
</protein>